<proteinExistence type="inferred from homology"/>
<organism>
    <name type="scientific">Sulfurovum sp. (strain NBC37-1)</name>
    <dbReference type="NCBI Taxonomy" id="387093"/>
    <lineage>
        <taxon>Bacteria</taxon>
        <taxon>Pseudomonadati</taxon>
        <taxon>Campylobacterota</taxon>
        <taxon>Epsilonproteobacteria</taxon>
        <taxon>Campylobacterales</taxon>
        <taxon>Sulfurovaceae</taxon>
        <taxon>Sulfurovum</taxon>
    </lineage>
</organism>
<keyword id="KW-0687">Ribonucleoprotein</keyword>
<keyword id="KW-0689">Ribosomal protein</keyword>
<keyword id="KW-0694">RNA-binding</keyword>
<keyword id="KW-0699">rRNA-binding</keyword>
<accession>A6QCQ4</accession>
<dbReference type="EMBL" id="AP009179">
    <property type="protein sequence ID" value="BAF73263.1"/>
    <property type="molecule type" value="Genomic_DNA"/>
</dbReference>
<dbReference type="RefSeq" id="WP_012084102.1">
    <property type="nucleotide sequence ID" value="NC_009663.1"/>
</dbReference>
<dbReference type="SMR" id="A6QCQ4"/>
<dbReference type="STRING" id="387093.SUN_2327"/>
<dbReference type="KEGG" id="sun:SUN_2327"/>
<dbReference type="eggNOG" id="COG0092">
    <property type="taxonomic scope" value="Bacteria"/>
</dbReference>
<dbReference type="HOGENOM" id="CLU_058591_0_2_7"/>
<dbReference type="OrthoDB" id="9806396at2"/>
<dbReference type="Proteomes" id="UP000006378">
    <property type="component" value="Chromosome"/>
</dbReference>
<dbReference type="GO" id="GO:0022627">
    <property type="term" value="C:cytosolic small ribosomal subunit"/>
    <property type="evidence" value="ECO:0007669"/>
    <property type="project" value="TreeGrafter"/>
</dbReference>
<dbReference type="GO" id="GO:0003729">
    <property type="term" value="F:mRNA binding"/>
    <property type="evidence" value="ECO:0007669"/>
    <property type="project" value="UniProtKB-UniRule"/>
</dbReference>
<dbReference type="GO" id="GO:0019843">
    <property type="term" value="F:rRNA binding"/>
    <property type="evidence" value="ECO:0007669"/>
    <property type="project" value="UniProtKB-UniRule"/>
</dbReference>
<dbReference type="GO" id="GO:0003735">
    <property type="term" value="F:structural constituent of ribosome"/>
    <property type="evidence" value="ECO:0007669"/>
    <property type="project" value="InterPro"/>
</dbReference>
<dbReference type="GO" id="GO:0006412">
    <property type="term" value="P:translation"/>
    <property type="evidence" value="ECO:0007669"/>
    <property type="project" value="UniProtKB-UniRule"/>
</dbReference>
<dbReference type="CDD" id="cd02412">
    <property type="entry name" value="KH-II_30S_S3"/>
    <property type="match status" value="1"/>
</dbReference>
<dbReference type="FunFam" id="3.30.1140.32:FF:000006">
    <property type="entry name" value="30S ribosomal protein S3"/>
    <property type="match status" value="1"/>
</dbReference>
<dbReference type="FunFam" id="3.30.300.20:FF:000001">
    <property type="entry name" value="30S ribosomal protein S3"/>
    <property type="match status" value="1"/>
</dbReference>
<dbReference type="Gene3D" id="3.30.300.20">
    <property type="match status" value="1"/>
</dbReference>
<dbReference type="Gene3D" id="3.30.1140.32">
    <property type="entry name" value="Ribosomal protein S3, C-terminal domain"/>
    <property type="match status" value="1"/>
</dbReference>
<dbReference type="HAMAP" id="MF_01309_B">
    <property type="entry name" value="Ribosomal_uS3_B"/>
    <property type="match status" value="1"/>
</dbReference>
<dbReference type="InterPro" id="IPR004087">
    <property type="entry name" value="KH_dom"/>
</dbReference>
<dbReference type="InterPro" id="IPR015946">
    <property type="entry name" value="KH_dom-like_a/b"/>
</dbReference>
<dbReference type="InterPro" id="IPR004044">
    <property type="entry name" value="KH_dom_type_2"/>
</dbReference>
<dbReference type="InterPro" id="IPR009019">
    <property type="entry name" value="KH_sf_prok-type"/>
</dbReference>
<dbReference type="InterPro" id="IPR036419">
    <property type="entry name" value="Ribosomal_S3_C_sf"/>
</dbReference>
<dbReference type="InterPro" id="IPR005704">
    <property type="entry name" value="Ribosomal_uS3_bac-typ"/>
</dbReference>
<dbReference type="InterPro" id="IPR001351">
    <property type="entry name" value="Ribosomal_uS3_C"/>
</dbReference>
<dbReference type="InterPro" id="IPR018280">
    <property type="entry name" value="Ribosomal_uS3_CS"/>
</dbReference>
<dbReference type="NCBIfam" id="TIGR01009">
    <property type="entry name" value="rpsC_bact"/>
    <property type="match status" value="1"/>
</dbReference>
<dbReference type="PANTHER" id="PTHR11760">
    <property type="entry name" value="30S/40S RIBOSOMAL PROTEIN S3"/>
    <property type="match status" value="1"/>
</dbReference>
<dbReference type="PANTHER" id="PTHR11760:SF19">
    <property type="entry name" value="SMALL RIBOSOMAL SUBUNIT PROTEIN US3C"/>
    <property type="match status" value="1"/>
</dbReference>
<dbReference type="Pfam" id="PF07650">
    <property type="entry name" value="KH_2"/>
    <property type="match status" value="1"/>
</dbReference>
<dbReference type="Pfam" id="PF00189">
    <property type="entry name" value="Ribosomal_S3_C"/>
    <property type="match status" value="1"/>
</dbReference>
<dbReference type="SMART" id="SM00322">
    <property type="entry name" value="KH"/>
    <property type="match status" value="1"/>
</dbReference>
<dbReference type="SUPFAM" id="SSF54814">
    <property type="entry name" value="Prokaryotic type KH domain (KH-domain type II)"/>
    <property type="match status" value="1"/>
</dbReference>
<dbReference type="SUPFAM" id="SSF54821">
    <property type="entry name" value="Ribosomal protein S3 C-terminal domain"/>
    <property type="match status" value="1"/>
</dbReference>
<dbReference type="PROSITE" id="PS50823">
    <property type="entry name" value="KH_TYPE_2"/>
    <property type="match status" value="1"/>
</dbReference>
<dbReference type="PROSITE" id="PS00548">
    <property type="entry name" value="RIBOSOMAL_S3"/>
    <property type="match status" value="1"/>
</dbReference>
<name>RS3_SULNB</name>
<sequence length="232" mass="25996">MGQKVNPIGLRLGINRNWESRWFPAKERTADFIAEDYKIRKFLKKELFYAGVSNIIIERTAKKLRINIITARPGIIIGKKGADIEKLKTTLVKMLGKDVAINIKEEKRPQASGQLAAENVATQLERRVAFRRAMKKVIQGALKSGAKGIKISVSGRLGGAEMARTEWYLEGRVPLHTLRAKIDYGFAEAQTTYGIIGIKVWIFKGEVLAKGIQPEPAEEKKGGRRPSRKRGE</sequence>
<gene>
    <name evidence="1" type="primary">rpsC</name>
    <name type="ordered locus">SUN_2327</name>
</gene>
<protein>
    <recommendedName>
        <fullName evidence="1">Small ribosomal subunit protein uS3</fullName>
    </recommendedName>
    <alternativeName>
        <fullName evidence="3">30S ribosomal protein S3</fullName>
    </alternativeName>
</protein>
<feature type="chain" id="PRO_1000086164" description="Small ribosomal subunit protein uS3">
    <location>
        <begin position="1"/>
        <end position="232"/>
    </location>
</feature>
<feature type="domain" description="KH type-2" evidence="1">
    <location>
        <begin position="39"/>
        <end position="107"/>
    </location>
</feature>
<feature type="region of interest" description="Disordered" evidence="2">
    <location>
        <begin position="213"/>
        <end position="232"/>
    </location>
</feature>
<feature type="compositionally biased region" description="Basic residues" evidence="2">
    <location>
        <begin position="222"/>
        <end position="232"/>
    </location>
</feature>
<evidence type="ECO:0000255" key="1">
    <source>
        <dbReference type="HAMAP-Rule" id="MF_01309"/>
    </source>
</evidence>
<evidence type="ECO:0000256" key="2">
    <source>
        <dbReference type="SAM" id="MobiDB-lite"/>
    </source>
</evidence>
<evidence type="ECO:0000305" key="3"/>
<comment type="function">
    <text evidence="1">Binds the lower part of the 30S subunit head. Binds mRNA in the 70S ribosome, positioning it for translation.</text>
</comment>
<comment type="subunit">
    <text evidence="1">Part of the 30S ribosomal subunit. Forms a tight complex with proteins S10 and S14.</text>
</comment>
<comment type="similarity">
    <text evidence="1">Belongs to the universal ribosomal protein uS3 family.</text>
</comment>
<reference key="1">
    <citation type="journal article" date="2007" name="Proc. Natl. Acad. Sci. U.S.A.">
        <title>Deep-sea vent epsilon-proteobacterial genomes provide insights into emergence of pathogens.</title>
        <authorList>
            <person name="Nakagawa S."/>
            <person name="Takaki Y."/>
            <person name="Shimamura S."/>
            <person name="Reysenbach A.-L."/>
            <person name="Takai K."/>
            <person name="Horikoshi K."/>
        </authorList>
    </citation>
    <scope>NUCLEOTIDE SEQUENCE [LARGE SCALE GENOMIC DNA]</scope>
    <source>
        <strain>NBC37-1</strain>
    </source>
</reference>